<sequence>MDMFWFIPTHGDSRYLGTSDGARQVSAEYVTQVAVAADTLGYEGVLIPTGRSCEDPWVIASSLINATRRLKFLVALRPGLMAPALAARTAASFDRLSGGRLLVNLVTGGDRGELEGDGVFLDHAERYEASAEFIRIWREIIAHSHSGESYDFDGKHLQVKAAKLLYPTVQRPYPPVWFGGSSDAAHDLAAEQVDTYLTWGEPPDAVAEKIASVRSKAAALGRTLTFGIRLHVIVRETEAEAWAAAESLISHLDDETVERAQSAFARMDSVGQRRMAALHSRGQRRTRADLEVSPNLWAGVGLVRGGAGTALVGDPQTVAKRIEEYAALGIDTFIFSGYPHLEEAYRFAELVFPLLPRTVKQKLPGQALSGPFGEVIANTIVPRASAR</sequence>
<proteinExistence type="inferred from homology"/>
<dbReference type="EC" id="1.14.14.5" evidence="1"/>
<dbReference type="EMBL" id="AE008923">
    <property type="protein sequence ID" value="AAM35738.1"/>
    <property type="molecule type" value="Genomic_DNA"/>
</dbReference>
<dbReference type="RefSeq" id="WP_005910687.1">
    <property type="nucleotide sequence ID" value="NC_003919.1"/>
</dbReference>
<dbReference type="SMR" id="Q8PP38"/>
<dbReference type="GeneID" id="66910041"/>
<dbReference type="KEGG" id="xac:XAC0850"/>
<dbReference type="eggNOG" id="COG2141">
    <property type="taxonomic scope" value="Bacteria"/>
</dbReference>
<dbReference type="HOGENOM" id="CLU_027853_1_0_6"/>
<dbReference type="Proteomes" id="UP000000576">
    <property type="component" value="Chromosome"/>
</dbReference>
<dbReference type="GO" id="GO:0008726">
    <property type="term" value="F:alkanesulfonate monooxygenase activity"/>
    <property type="evidence" value="ECO:0007669"/>
    <property type="project" value="UniProtKB-UniRule"/>
</dbReference>
<dbReference type="GO" id="GO:0046306">
    <property type="term" value="P:alkanesulfonate catabolic process"/>
    <property type="evidence" value="ECO:0007669"/>
    <property type="project" value="TreeGrafter"/>
</dbReference>
<dbReference type="CDD" id="cd01094">
    <property type="entry name" value="Alkanesulfonate_monoxygenase"/>
    <property type="match status" value="1"/>
</dbReference>
<dbReference type="Gene3D" id="3.20.20.30">
    <property type="entry name" value="Luciferase-like domain"/>
    <property type="match status" value="1"/>
</dbReference>
<dbReference type="HAMAP" id="MF_01229">
    <property type="entry name" value="Alkanesulf_monooxygen"/>
    <property type="match status" value="1"/>
</dbReference>
<dbReference type="InterPro" id="IPR019911">
    <property type="entry name" value="Alkanesulphonate_mOase_FMN-dep"/>
</dbReference>
<dbReference type="InterPro" id="IPR011251">
    <property type="entry name" value="Luciferase-like_dom"/>
</dbReference>
<dbReference type="InterPro" id="IPR036661">
    <property type="entry name" value="Luciferase-like_sf"/>
</dbReference>
<dbReference type="InterPro" id="IPR050172">
    <property type="entry name" value="SsuD_RutA_monooxygenase"/>
</dbReference>
<dbReference type="NCBIfam" id="TIGR03565">
    <property type="entry name" value="alk_sulf_monoox"/>
    <property type="match status" value="1"/>
</dbReference>
<dbReference type="NCBIfam" id="NF001939">
    <property type="entry name" value="PRK00719.1"/>
    <property type="match status" value="1"/>
</dbReference>
<dbReference type="PANTHER" id="PTHR42847">
    <property type="entry name" value="ALKANESULFONATE MONOOXYGENASE"/>
    <property type="match status" value="1"/>
</dbReference>
<dbReference type="PANTHER" id="PTHR42847:SF4">
    <property type="entry name" value="ALKANESULFONATE MONOOXYGENASE-RELATED"/>
    <property type="match status" value="1"/>
</dbReference>
<dbReference type="Pfam" id="PF00296">
    <property type="entry name" value="Bac_luciferase"/>
    <property type="match status" value="1"/>
</dbReference>
<dbReference type="SUPFAM" id="SSF51679">
    <property type="entry name" value="Bacterial luciferase-like"/>
    <property type="match status" value="1"/>
</dbReference>
<keyword id="KW-0285">Flavoprotein</keyword>
<keyword id="KW-0288">FMN</keyword>
<keyword id="KW-0503">Monooxygenase</keyword>
<keyword id="KW-0560">Oxidoreductase</keyword>
<feature type="chain" id="PRO_0000216721" description="Alkanesulfonate monooxygenase">
    <location>
        <begin position="1"/>
        <end position="387"/>
    </location>
</feature>
<organism>
    <name type="scientific">Xanthomonas axonopodis pv. citri (strain 306)</name>
    <dbReference type="NCBI Taxonomy" id="190486"/>
    <lineage>
        <taxon>Bacteria</taxon>
        <taxon>Pseudomonadati</taxon>
        <taxon>Pseudomonadota</taxon>
        <taxon>Gammaproteobacteria</taxon>
        <taxon>Lysobacterales</taxon>
        <taxon>Lysobacteraceae</taxon>
        <taxon>Xanthomonas</taxon>
    </lineage>
</organism>
<comment type="function">
    <text evidence="1">Catalyzes the desulfonation of aliphatic sulfonates.</text>
</comment>
<comment type="catalytic activity">
    <reaction evidence="1">
        <text>an alkanesulfonate + FMNH2 + O2 = an aldehyde + FMN + sulfite + H2O + 2 H(+)</text>
        <dbReference type="Rhea" id="RHEA:23064"/>
        <dbReference type="ChEBI" id="CHEBI:15377"/>
        <dbReference type="ChEBI" id="CHEBI:15378"/>
        <dbReference type="ChEBI" id="CHEBI:15379"/>
        <dbReference type="ChEBI" id="CHEBI:17359"/>
        <dbReference type="ChEBI" id="CHEBI:17478"/>
        <dbReference type="ChEBI" id="CHEBI:57618"/>
        <dbReference type="ChEBI" id="CHEBI:58210"/>
        <dbReference type="ChEBI" id="CHEBI:134249"/>
        <dbReference type="EC" id="1.14.14.5"/>
    </reaction>
</comment>
<comment type="similarity">
    <text evidence="1">Belongs to the SsuD family.</text>
</comment>
<reference key="1">
    <citation type="journal article" date="2002" name="Nature">
        <title>Comparison of the genomes of two Xanthomonas pathogens with differing host specificities.</title>
        <authorList>
            <person name="da Silva A.C.R."/>
            <person name="Ferro J.A."/>
            <person name="Reinach F.C."/>
            <person name="Farah C.S."/>
            <person name="Furlan L.R."/>
            <person name="Quaggio R.B."/>
            <person name="Monteiro-Vitorello C.B."/>
            <person name="Van Sluys M.A."/>
            <person name="Almeida N.F. Jr."/>
            <person name="Alves L.M.C."/>
            <person name="do Amaral A.M."/>
            <person name="Bertolini M.C."/>
            <person name="Camargo L.E.A."/>
            <person name="Camarotte G."/>
            <person name="Cannavan F."/>
            <person name="Cardozo J."/>
            <person name="Chambergo F."/>
            <person name="Ciapina L.P."/>
            <person name="Cicarelli R.M.B."/>
            <person name="Coutinho L.L."/>
            <person name="Cursino-Santos J.R."/>
            <person name="El-Dorry H."/>
            <person name="Faria J.B."/>
            <person name="Ferreira A.J.S."/>
            <person name="Ferreira R.C.C."/>
            <person name="Ferro M.I.T."/>
            <person name="Formighieri E.F."/>
            <person name="Franco M.C."/>
            <person name="Greggio C.C."/>
            <person name="Gruber A."/>
            <person name="Katsuyama A.M."/>
            <person name="Kishi L.T."/>
            <person name="Leite R.P."/>
            <person name="Lemos E.G.M."/>
            <person name="Lemos M.V.F."/>
            <person name="Locali E.C."/>
            <person name="Machado M.A."/>
            <person name="Madeira A.M.B.N."/>
            <person name="Martinez-Rossi N.M."/>
            <person name="Martins E.C."/>
            <person name="Meidanis J."/>
            <person name="Menck C.F.M."/>
            <person name="Miyaki C.Y."/>
            <person name="Moon D.H."/>
            <person name="Moreira L.M."/>
            <person name="Novo M.T.M."/>
            <person name="Okura V.K."/>
            <person name="Oliveira M.C."/>
            <person name="Oliveira V.R."/>
            <person name="Pereira H.A."/>
            <person name="Rossi A."/>
            <person name="Sena J.A.D."/>
            <person name="Silva C."/>
            <person name="de Souza R.F."/>
            <person name="Spinola L.A.F."/>
            <person name="Takita M.A."/>
            <person name="Tamura R.E."/>
            <person name="Teixeira E.C."/>
            <person name="Tezza R.I.D."/>
            <person name="Trindade dos Santos M."/>
            <person name="Truffi D."/>
            <person name="Tsai S.M."/>
            <person name="White F.F."/>
            <person name="Setubal J.C."/>
            <person name="Kitajima J.P."/>
        </authorList>
    </citation>
    <scope>NUCLEOTIDE SEQUENCE [LARGE SCALE GENOMIC DNA]</scope>
    <source>
        <strain>306</strain>
    </source>
</reference>
<accession>Q8PP38</accession>
<protein>
    <recommendedName>
        <fullName evidence="1">Alkanesulfonate monooxygenase</fullName>
        <ecNumber evidence="1">1.14.14.5</ecNumber>
    </recommendedName>
    <alternativeName>
        <fullName evidence="1">FMNH2-dependent aliphatic sulfonate monooxygenase</fullName>
    </alternativeName>
</protein>
<name>SSUD_XANAC</name>
<evidence type="ECO:0000255" key="1">
    <source>
        <dbReference type="HAMAP-Rule" id="MF_01229"/>
    </source>
</evidence>
<gene>
    <name evidence="1" type="primary">ssuD</name>
    <name type="ordered locus">XAC0850</name>
</gene>